<name>RL14_SALHS</name>
<organism>
    <name type="scientific">Salmonella heidelberg (strain SL476)</name>
    <dbReference type="NCBI Taxonomy" id="454169"/>
    <lineage>
        <taxon>Bacteria</taxon>
        <taxon>Pseudomonadati</taxon>
        <taxon>Pseudomonadota</taxon>
        <taxon>Gammaproteobacteria</taxon>
        <taxon>Enterobacterales</taxon>
        <taxon>Enterobacteriaceae</taxon>
        <taxon>Salmonella</taxon>
    </lineage>
</organism>
<accession>B4TKK5</accession>
<proteinExistence type="inferred from homology"/>
<keyword id="KW-0687">Ribonucleoprotein</keyword>
<keyword id="KW-0689">Ribosomal protein</keyword>
<keyword id="KW-0694">RNA-binding</keyword>
<keyword id="KW-0699">rRNA-binding</keyword>
<sequence>MIQEQTMLNVADNSGARRVMCIKVLGGSHRRYAGVGDIIKITIKEAIPRGKVKKGDVLKAVVVRTKKGVRRPDGSVIRFDGNACVILNNNSEQPIGTRIFGPVTRELRNEKFMKIISLAPEVL</sequence>
<protein>
    <recommendedName>
        <fullName evidence="1">Large ribosomal subunit protein uL14</fullName>
    </recommendedName>
    <alternativeName>
        <fullName evidence="2">50S ribosomal protein L14</fullName>
    </alternativeName>
</protein>
<evidence type="ECO:0000255" key="1">
    <source>
        <dbReference type="HAMAP-Rule" id="MF_01367"/>
    </source>
</evidence>
<evidence type="ECO:0000305" key="2"/>
<feature type="chain" id="PRO_1000144325" description="Large ribosomal subunit protein uL14">
    <location>
        <begin position="1"/>
        <end position="123"/>
    </location>
</feature>
<reference key="1">
    <citation type="journal article" date="2011" name="J. Bacteriol.">
        <title>Comparative genomics of 28 Salmonella enterica isolates: evidence for CRISPR-mediated adaptive sublineage evolution.</title>
        <authorList>
            <person name="Fricke W.F."/>
            <person name="Mammel M.K."/>
            <person name="McDermott P.F."/>
            <person name="Tartera C."/>
            <person name="White D.G."/>
            <person name="Leclerc J.E."/>
            <person name="Ravel J."/>
            <person name="Cebula T.A."/>
        </authorList>
    </citation>
    <scope>NUCLEOTIDE SEQUENCE [LARGE SCALE GENOMIC DNA]</scope>
    <source>
        <strain>SL476</strain>
    </source>
</reference>
<dbReference type="EMBL" id="CP001120">
    <property type="protein sequence ID" value="ACF67799.1"/>
    <property type="molecule type" value="Genomic_DNA"/>
</dbReference>
<dbReference type="RefSeq" id="WP_000613954.1">
    <property type="nucleotide sequence ID" value="NC_011083.1"/>
</dbReference>
<dbReference type="SMR" id="B4TKK5"/>
<dbReference type="GeneID" id="98390432"/>
<dbReference type="KEGG" id="seh:SeHA_C3734"/>
<dbReference type="HOGENOM" id="CLU_095071_2_1_6"/>
<dbReference type="Proteomes" id="UP000001866">
    <property type="component" value="Chromosome"/>
</dbReference>
<dbReference type="GO" id="GO:0022625">
    <property type="term" value="C:cytosolic large ribosomal subunit"/>
    <property type="evidence" value="ECO:0007669"/>
    <property type="project" value="TreeGrafter"/>
</dbReference>
<dbReference type="GO" id="GO:0070180">
    <property type="term" value="F:large ribosomal subunit rRNA binding"/>
    <property type="evidence" value="ECO:0007669"/>
    <property type="project" value="TreeGrafter"/>
</dbReference>
<dbReference type="GO" id="GO:0003735">
    <property type="term" value="F:structural constituent of ribosome"/>
    <property type="evidence" value="ECO:0007669"/>
    <property type="project" value="InterPro"/>
</dbReference>
<dbReference type="GO" id="GO:0006412">
    <property type="term" value="P:translation"/>
    <property type="evidence" value="ECO:0007669"/>
    <property type="project" value="UniProtKB-UniRule"/>
</dbReference>
<dbReference type="CDD" id="cd00337">
    <property type="entry name" value="Ribosomal_uL14"/>
    <property type="match status" value="1"/>
</dbReference>
<dbReference type="FunFam" id="2.40.150.20:FF:000001">
    <property type="entry name" value="50S ribosomal protein L14"/>
    <property type="match status" value="1"/>
</dbReference>
<dbReference type="Gene3D" id="2.40.150.20">
    <property type="entry name" value="Ribosomal protein L14"/>
    <property type="match status" value="1"/>
</dbReference>
<dbReference type="HAMAP" id="MF_01367">
    <property type="entry name" value="Ribosomal_uL14"/>
    <property type="match status" value="1"/>
</dbReference>
<dbReference type="InterPro" id="IPR000218">
    <property type="entry name" value="Ribosomal_uL14"/>
</dbReference>
<dbReference type="InterPro" id="IPR005745">
    <property type="entry name" value="Ribosomal_uL14_bac-type"/>
</dbReference>
<dbReference type="InterPro" id="IPR019972">
    <property type="entry name" value="Ribosomal_uL14_CS"/>
</dbReference>
<dbReference type="InterPro" id="IPR036853">
    <property type="entry name" value="Ribosomal_uL14_sf"/>
</dbReference>
<dbReference type="NCBIfam" id="TIGR01067">
    <property type="entry name" value="rplN_bact"/>
    <property type="match status" value="1"/>
</dbReference>
<dbReference type="PANTHER" id="PTHR11761">
    <property type="entry name" value="50S/60S RIBOSOMAL PROTEIN L14/L23"/>
    <property type="match status" value="1"/>
</dbReference>
<dbReference type="PANTHER" id="PTHR11761:SF3">
    <property type="entry name" value="LARGE RIBOSOMAL SUBUNIT PROTEIN UL14M"/>
    <property type="match status" value="1"/>
</dbReference>
<dbReference type="Pfam" id="PF00238">
    <property type="entry name" value="Ribosomal_L14"/>
    <property type="match status" value="1"/>
</dbReference>
<dbReference type="SMART" id="SM01374">
    <property type="entry name" value="Ribosomal_L14"/>
    <property type="match status" value="1"/>
</dbReference>
<dbReference type="SUPFAM" id="SSF50193">
    <property type="entry name" value="Ribosomal protein L14"/>
    <property type="match status" value="1"/>
</dbReference>
<dbReference type="PROSITE" id="PS00049">
    <property type="entry name" value="RIBOSOMAL_L14"/>
    <property type="match status" value="1"/>
</dbReference>
<comment type="function">
    <text evidence="1">Binds to 23S rRNA. Forms part of two intersubunit bridges in the 70S ribosome.</text>
</comment>
<comment type="subunit">
    <text evidence="1">Part of the 50S ribosomal subunit. Forms a cluster with proteins L3 and L19. In the 70S ribosome, L14 and L19 interact and together make contacts with the 16S rRNA in bridges B5 and B8.</text>
</comment>
<comment type="similarity">
    <text evidence="1">Belongs to the universal ribosomal protein uL14 family.</text>
</comment>
<gene>
    <name evidence="1" type="primary">rplN</name>
    <name type="ordered locus">SeHA_C3734</name>
</gene>